<keyword id="KW-0010">Activator</keyword>
<keyword id="KW-0025">Alternative splicing</keyword>
<keyword id="KW-0131">Cell cycle</keyword>
<keyword id="KW-0132">Cell division</keyword>
<keyword id="KW-0137">Centromere</keyword>
<keyword id="KW-0158">Chromosome</keyword>
<keyword id="KW-0159">Chromosome partition</keyword>
<keyword id="KW-0175">Coiled coil</keyword>
<keyword id="KW-0995">Kinetochore</keyword>
<keyword id="KW-0498">Mitosis</keyword>
<keyword id="KW-0539">Nucleus</keyword>
<keyword id="KW-1185">Reference proteome</keyword>
<keyword id="KW-0804">Transcription</keyword>
<keyword id="KW-0805">Transcription regulation</keyword>
<reference evidence="6 10" key="1">
    <citation type="journal article" date="2001" name="Biochem. J.">
        <title>Cloning and characterization of the mouse polyamine-modulated factor-1 (mPMF-1) gene: an alternatively spliced homologue of the human transcription factor.</title>
        <authorList>
            <person name="Wang Y."/>
            <person name="Devereux W."/>
            <person name="Woster P.M."/>
            <person name="Casero R.A. Jr."/>
        </authorList>
    </citation>
    <scope>NUCLEOTIDE SEQUENCE [GENOMIC DNA / MRNA] (ISOFORMS 1 AND 2)</scope>
    <scope>FUNCTION</scope>
    <scope>INTERACTION WITH NFE2L2</scope>
    <scope>INDUCTION</scope>
    <source>
        <tissue evidence="10">Embryonic stem cell</tissue>
        <tissue evidence="11">Liver</tissue>
    </source>
</reference>
<reference evidence="6 12" key="2">
    <citation type="journal article" date="2005" name="Science">
        <title>The transcriptional landscape of the mammalian genome.</title>
        <authorList>
            <person name="Carninci P."/>
            <person name="Kasukawa T."/>
            <person name="Katayama S."/>
            <person name="Gough J."/>
            <person name="Frith M.C."/>
            <person name="Maeda N."/>
            <person name="Oyama R."/>
            <person name="Ravasi T."/>
            <person name="Lenhard B."/>
            <person name="Wells C."/>
            <person name="Kodzius R."/>
            <person name="Shimokawa K."/>
            <person name="Bajic V.B."/>
            <person name="Brenner S.E."/>
            <person name="Batalov S."/>
            <person name="Forrest A.R."/>
            <person name="Zavolan M."/>
            <person name="Davis M.J."/>
            <person name="Wilming L.G."/>
            <person name="Aidinis V."/>
            <person name="Allen J.E."/>
            <person name="Ambesi-Impiombato A."/>
            <person name="Apweiler R."/>
            <person name="Aturaliya R.N."/>
            <person name="Bailey T.L."/>
            <person name="Bansal M."/>
            <person name="Baxter L."/>
            <person name="Beisel K.W."/>
            <person name="Bersano T."/>
            <person name="Bono H."/>
            <person name="Chalk A.M."/>
            <person name="Chiu K.P."/>
            <person name="Choudhary V."/>
            <person name="Christoffels A."/>
            <person name="Clutterbuck D.R."/>
            <person name="Crowe M.L."/>
            <person name="Dalla E."/>
            <person name="Dalrymple B.P."/>
            <person name="de Bono B."/>
            <person name="Della Gatta G."/>
            <person name="di Bernardo D."/>
            <person name="Down T."/>
            <person name="Engstrom P."/>
            <person name="Fagiolini M."/>
            <person name="Faulkner G."/>
            <person name="Fletcher C.F."/>
            <person name="Fukushima T."/>
            <person name="Furuno M."/>
            <person name="Futaki S."/>
            <person name="Gariboldi M."/>
            <person name="Georgii-Hemming P."/>
            <person name="Gingeras T.R."/>
            <person name="Gojobori T."/>
            <person name="Green R.E."/>
            <person name="Gustincich S."/>
            <person name="Harbers M."/>
            <person name="Hayashi Y."/>
            <person name="Hensch T.K."/>
            <person name="Hirokawa N."/>
            <person name="Hill D."/>
            <person name="Huminiecki L."/>
            <person name="Iacono M."/>
            <person name="Ikeo K."/>
            <person name="Iwama A."/>
            <person name="Ishikawa T."/>
            <person name="Jakt M."/>
            <person name="Kanapin A."/>
            <person name="Katoh M."/>
            <person name="Kawasawa Y."/>
            <person name="Kelso J."/>
            <person name="Kitamura H."/>
            <person name="Kitano H."/>
            <person name="Kollias G."/>
            <person name="Krishnan S.P."/>
            <person name="Kruger A."/>
            <person name="Kummerfeld S.K."/>
            <person name="Kurochkin I.V."/>
            <person name="Lareau L.F."/>
            <person name="Lazarevic D."/>
            <person name="Lipovich L."/>
            <person name="Liu J."/>
            <person name="Liuni S."/>
            <person name="McWilliam S."/>
            <person name="Madan Babu M."/>
            <person name="Madera M."/>
            <person name="Marchionni L."/>
            <person name="Matsuda H."/>
            <person name="Matsuzawa S."/>
            <person name="Miki H."/>
            <person name="Mignone F."/>
            <person name="Miyake S."/>
            <person name="Morris K."/>
            <person name="Mottagui-Tabar S."/>
            <person name="Mulder N."/>
            <person name="Nakano N."/>
            <person name="Nakauchi H."/>
            <person name="Ng P."/>
            <person name="Nilsson R."/>
            <person name="Nishiguchi S."/>
            <person name="Nishikawa S."/>
            <person name="Nori F."/>
            <person name="Ohara O."/>
            <person name="Okazaki Y."/>
            <person name="Orlando V."/>
            <person name="Pang K.C."/>
            <person name="Pavan W.J."/>
            <person name="Pavesi G."/>
            <person name="Pesole G."/>
            <person name="Petrovsky N."/>
            <person name="Piazza S."/>
            <person name="Reed J."/>
            <person name="Reid J.F."/>
            <person name="Ring B.Z."/>
            <person name="Ringwald M."/>
            <person name="Rost B."/>
            <person name="Ruan Y."/>
            <person name="Salzberg S.L."/>
            <person name="Sandelin A."/>
            <person name="Schneider C."/>
            <person name="Schoenbach C."/>
            <person name="Sekiguchi K."/>
            <person name="Semple C.A."/>
            <person name="Seno S."/>
            <person name="Sessa L."/>
            <person name="Sheng Y."/>
            <person name="Shibata Y."/>
            <person name="Shimada H."/>
            <person name="Shimada K."/>
            <person name="Silva D."/>
            <person name="Sinclair B."/>
            <person name="Sperling S."/>
            <person name="Stupka E."/>
            <person name="Sugiura K."/>
            <person name="Sultana R."/>
            <person name="Takenaka Y."/>
            <person name="Taki K."/>
            <person name="Tammoja K."/>
            <person name="Tan S.L."/>
            <person name="Tang S."/>
            <person name="Taylor M.S."/>
            <person name="Tegner J."/>
            <person name="Teichmann S.A."/>
            <person name="Ueda H.R."/>
            <person name="van Nimwegen E."/>
            <person name="Verardo R."/>
            <person name="Wei C.L."/>
            <person name="Yagi K."/>
            <person name="Yamanishi H."/>
            <person name="Zabarovsky E."/>
            <person name="Zhu S."/>
            <person name="Zimmer A."/>
            <person name="Hide W."/>
            <person name="Bult C."/>
            <person name="Grimmond S.M."/>
            <person name="Teasdale R.D."/>
            <person name="Liu E.T."/>
            <person name="Brusic V."/>
            <person name="Quackenbush J."/>
            <person name="Wahlestedt C."/>
            <person name="Mattick J.S."/>
            <person name="Hume D.A."/>
            <person name="Kai C."/>
            <person name="Sasaki D."/>
            <person name="Tomaru Y."/>
            <person name="Fukuda S."/>
            <person name="Kanamori-Katayama M."/>
            <person name="Suzuki M."/>
            <person name="Aoki J."/>
            <person name="Arakawa T."/>
            <person name="Iida J."/>
            <person name="Imamura K."/>
            <person name="Itoh M."/>
            <person name="Kato T."/>
            <person name="Kawaji H."/>
            <person name="Kawagashira N."/>
            <person name="Kawashima T."/>
            <person name="Kojima M."/>
            <person name="Kondo S."/>
            <person name="Konno H."/>
            <person name="Nakano K."/>
            <person name="Ninomiya N."/>
            <person name="Nishio T."/>
            <person name="Okada M."/>
            <person name="Plessy C."/>
            <person name="Shibata K."/>
            <person name="Shiraki T."/>
            <person name="Suzuki S."/>
            <person name="Tagami M."/>
            <person name="Waki K."/>
            <person name="Watahiki A."/>
            <person name="Okamura-Oho Y."/>
            <person name="Suzuki H."/>
            <person name="Kawai J."/>
            <person name="Hayashizaki Y."/>
        </authorList>
    </citation>
    <scope>NUCLEOTIDE SEQUENCE [LARGE SCALE MRNA] (ISOFORM 1)</scope>
    <source>
        <strain evidence="15">BALB/cJ</strain>
        <strain evidence="12">C57BL/6J</strain>
        <tissue evidence="14">Bone marrow</tissue>
        <tissue evidence="12">Embryo</tissue>
        <tissue evidence="13">Hippocampus</tissue>
    </source>
</reference>
<reference evidence="6 8" key="3">
    <citation type="journal article" date="2004" name="Genome Res.">
        <title>The status, quality, and expansion of the NIH full-length cDNA project: the Mammalian Gene Collection (MGC).</title>
        <authorList>
            <consortium name="The MGC Project Team"/>
        </authorList>
    </citation>
    <scope>NUCLEOTIDE SEQUENCE [LARGE SCALE MRNA] (ISOFORM 1)</scope>
    <source>
        <strain evidence="7">Czech II</strain>
        <strain evidence="8">FVB/N</strain>
        <strain evidence="9">NMRI</strain>
        <tissue evidence="8">Mammary gland</tissue>
    </source>
</reference>
<reference key="4">
    <citation type="journal article" date="2010" name="Cell">
        <title>A tissue-specific atlas of mouse protein phosphorylation and expression.</title>
        <authorList>
            <person name="Huttlin E.L."/>
            <person name="Jedrychowski M.P."/>
            <person name="Elias J.E."/>
            <person name="Goswami T."/>
            <person name="Rad R."/>
            <person name="Beausoleil S.A."/>
            <person name="Villen J."/>
            <person name="Haas W."/>
            <person name="Sowa M.E."/>
            <person name="Gygi S.P."/>
        </authorList>
    </citation>
    <scope>IDENTIFICATION BY MASS SPECTROMETRY [LARGE SCALE ANALYSIS]</scope>
    <source>
        <tissue>Testis</tissue>
    </source>
</reference>
<evidence type="ECO:0000250" key="1"/>
<evidence type="ECO:0000255" key="2"/>
<evidence type="ECO:0000256" key="3">
    <source>
        <dbReference type="SAM" id="MobiDB-lite"/>
    </source>
</evidence>
<evidence type="ECO:0000269" key="4">
    <source>
    </source>
</evidence>
<evidence type="ECO:0000303" key="5">
    <source>
    </source>
</evidence>
<evidence type="ECO:0000305" key="6"/>
<evidence type="ECO:0000312" key="7">
    <source>
        <dbReference type="EMBL" id="AAH34333.1"/>
    </source>
</evidence>
<evidence type="ECO:0000312" key="8">
    <source>
        <dbReference type="EMBL" id="AAH37139.1"/>
    </source>
</evidence>
<evidence type="ECO:0000312" key="9">
    <source>
        <dbReference type="EMBL" id="AAH49223.1"/>
    </source>
</evidence>
<evidence type="ECO:0000312" key="10">
    <source>
        <dbReference type="EMBL" id="AAK84829.1"/>
    </source>
</evidence>
<evidence type="ECO:0000312" key="11">
    <source>
        <dbReference type="EMBL" id="AAK84830.1"/>
    </source>
</evidence>
<evidence type="ECO:0000312" key="12">
    <source>
        <dbReference type="EMBL" id="BAB27447.1"/>
    </source>
</evidence>
<evidence type="ECO:0000312" key="13">
    <source>
        <dbReference type="EMBL" id="BAB28994.1"/>
    </source>
</evidence>
<evidence type="ECO:0000312" key="14">
    <source>
        <dbReference type="EMBL" id="BAE29695.1"/>
    </source>
</evidence>
<evidence type="ECO:0000312" key="15">
    <source>
        <dbReference type="EMBL" id="BAE40160.1"/>
    </source>
</evidence>
<evidence type="ECO:0000312" key="16">
    <source>
        <dbReference type="MGI" id="MGI:1914287"/>
    </source>
</evidence>
<feature type="chain" id="PRO_0000248238" description="Polyamine-modulated factor 1">
    <location>
        <begin position="1"/>
        <end position="202"/>
    </location>
</feature>
<feature type="region of interest" description="Disordered" evidence="3">
    <location>
        <begin position="1"/>
        <end position="26"/>
    </location>
</feature>
<feature type="coiled-coil region" evidence="2">
    <location>
        <begin position="153"/>
        <end position="194"/>
    </location>
</feature>
<feature type="compositionally biased region" description="Basic and acidic residues" evidence="3">
    <location>
        <begin position="1"/>
        <end position="15"/>
    </location>
</feature>
<feature type="splice variant" id="VSP_052141" description="In isoform 2." evidence="5">
    <original>SYERFTTCYKHFHQLNPEVTQRIYDKFVAQLQTSIREEISEIKEEGNLEAVLNSLDKIIEEGRERGEPAW</original>
    <variation>R</variation>
    <location>
        <begin position="51"/>
        <end position="120"/>
    </location>
</feature>
<feature type="sequence conflict" description="In Ref. 2; BAB28994." evidence="6" ref="2">
    <original>L</original>
    <variation>H</variation>
    <location>
        <position position="34"/>
    </location>
</feature>
<feature type="sequence conflict" description="In Ref. 3; AAH34333." evidence="6" ref="3">
    <original>Y</original>
    <variation>F</variation>
    <location>
        <position position="52"/>
    </location>
</feature>
<feature type="sequence conflict" description="In Ref. 2; BAE29695." evidence="6" ref="2">
    <original>I</original>
    <variation>K</variation>
    <location>
        <position position="109"/>
    </location>
</feature>
<feature type="sequence conflict" description="In Ref. 3; AAH34333." evidence="6" ref="3">
    <original>R</original>
    <variation>H</variation>
    <location>
        <position position="115"/>
    </location>
</feature>
<name>PMF1_MOUSE</name>
<accession>Q9CPV5</accession>
<accession>Q3UCB8</accession>
<accession>Q8K237</accession>
<accession>Q924B3</accession>
<accession>Q9D6E2</accession>
<protein>
    <recommendedName>
        <fullName>Polyamine-modulated factor 1</fullName>
        <shortName>PMF-1</shortName>
    </recommendedName>
</protein>
<organism>
    <name type="scientific">Mus musculus</name>
    <name type="common">Mouse</name>
    <dbReference type="NCBI Taxonomy" id="10090"/>
    <lineage>
        <taxon>Eukaryota</taxon>
        <taxon>Metazoa</taxon>
        <taxon>Chordata</taxon>
        <taxon>Craniata</taxon>
        <taxon>Vertebrata</taxon>
        <taxon>Euteleostomi</taxon>
        <taxon>Mammalia</taxon>
        <taxon>Eutheria</taxon>
        <taxon>Euarchontoglires</taxon>
        <taxon>Glires</taxon>
        <taxon>Rodentia</taxon>
        <taxon>Myomorpha</taxon>
        <taxon>Muroidea</taxon>
        <taxon>Muridae</taxon>
        <taxon>Murinae</taxon>
        <taxon>Mus</taxon>
        <taxon>Mus</taxon>
    </lineage>
</organism>
<sequence>MAEVSRDSEAAERGPEGSSPEAVPGDATIPRVKLLDAIVDTFLQKLVADRSYERFTTCYKHFHQLNPEVTQRIYDKFVAQLQTSIREEISEIKEEGNLEAVLNSLDKIIEEGRERGEPAWRPSGIPEKDLCSVMAPYFLKQQDTLCHQVRKQEAKNQELADAVLAGRRQVEELQQQVRALQQTWQALHREQRELLSVLRAPE</sequence>
<dbReference type="EMBL" id="AF348509">
    <property type="protein sequence ID" value="AAK84828.1"/>
    <property type="molecule type" value="mRNA"/>
</dbReference>
<dbReference type="EMBL" id="AF348510">
    <property type="protein sequence ID" value="AAK84829.1"/>
    <property type="molecule type" value="mRNA"/>
</dbReference>
<dbReference type="EMBL" id="AF348512">
    <property type="protein sequence ID" value="AAK84830.1"/>
    <property type="molecule type" value="Genomic_DNA"/>
</dbReference>
<dbReference type="EMBL" id="AF348511">
    <property type="protein sequence ID" value="AAK84830.1"/>
    <property type="status" value="JOINED"/>
    <property type="molecule type" value="Genomic_DNA"/>
</dbReference>
<dbReference type="EMBL" id="AK011174">
    <property type="protein sequence ID" value="BAB27447.1"/>
    <property type="molecule type" value="mRNA"/>
</dbReference>
<dbReference type="EMBL" id="AK012113">
    <property type="protein sequence ID" value="BAB28041.1"/>
    <property type="molecule type" value="mRNA"/>
</dbReference>
<dbReference type="EMBL" id="AK013787">
    <property type="protein sequence ID" value="BAB28994.1"/>
    <property type="molecule type" value="mRNA"/>
</dbReference>
<dbReference type="EMBL" id="AK150603">
    <property type="protein sequence ID" value="BAE29695.1"/>
    <property type="molecule type" value="mRNA"/>
</dbReference>
<dbReference type="EMBL" id="AK168200">
    <property type="protein sequence ID" value="BAE40160.1"/>
    <property type="molecule type" value="mRNA"/>
</dbReference>
<dbReference type="EMBL" id="BC034333">
    <property type="protein sequence ID" value="AAH34333.1"/>
    <property type="molecule type" value="mRNA"/>
</dbReference>
<dbReference type="EMBL" id="BC037139">
    <property type="protein sequence ID" value="AAH37139.1"/>
    <property type="molecule type" value="mRNA"/>
</dbReference>
<dbReference type="EMBL" id="BC049223">
    <property type="protein sequence ID" value="AAH49223.1"/>
    <property type="molecule type" value="mRNA"/>
</dbReference>
<dbReference type="CCDS" id="CCDS38481.1">
    <molecule id="Q9CPV5-1"/>
</dbReference>
<dbReference type="CCDS" id="CCDS79942.1">
    <molecule id="Q9CPV5-2"/>
</dbReference>
<dbReference type="RefSeq" id="NP_001297534.1">
    <molecule id="Q9CPV5-2"/>
    <property type="nucleotide sequence ID" value="NM_001310605.2"/>
</dbReference>
<dbReference type="RefSeq" id="NP_080204.1">
    <molecule id="Q9CPV5-1"/>
    <property type="nucleotide sequence ID" value="NM_025928.5"/>
</dbReference>
<dbReference type="SMR" id="Q9CPV5"/>
<dbReference type="ComplexPortal" id="CPX-5701">
    <property type="entry name" value="Kinetochore MIS12 complex"/>
</dbReference>
<dbReference type="FunCoup" id="Q9CPV5">
    <property type="interactions" value="2077"/>
</dbReference>
<dbReference type="IntAct" id="Q9CPV5">
    <property type="interactions" value="1"/>
</dbReference>
<dbReference type="MINT" id="Q9CPV5"/>
<dbReference type="STRING" id="10090.ENSMUSP00000062420"/>
<dbReference type="iPTMnet" id="Q9CPV5"/>
<dbReference type="PhosphoSitePlus" id="Q9CPV5"/>
<dbReference type="REPRODUCTION-2DPAGE" id="IPI00623557"/>
<dbReference type="jPOST" id="Q9CPV5"/>
<dbReference type="PaxDb" id="10090-ENSMUSP00000062420"/>
<dbReference type="PeptideAtlas" id="Q9CPV5"/>
<dbReference type="ProteomicsDB" id="289697">
    <molecule id="Q9CPV5-1"/>
</dbReference>
<dbReference type="ProteomicsDB" id="289698">
    <molecule id="Q9CPV5-2"/>
</dbReference>
<dbReference type="Pumba" id="Q9CPV5"/>
<dbReference type="Antibodypedia" id="4085">
    <property type="antibodies" value="170 antibodies from 27 providers"/>
</dbReference>
<dbReference type="DNASU" id="67037"/>
<dbReference type="Ensembl" id="ENSMUST00000056370.13">
    <molecule id="Q9CPV5-1"/>
    <property type="protein sequence ID" value="ENSMUSP00000062420.8"/>
    <property type="gene ID" value="ENSMUSG00000028066.16"/>
</dbReference>
<dbReference type="Ensembl" id="ENSMUST00000193338.6">
    <molecule id="Q9CPV5-2"/>
    <property type="protein sequence ID" value="ENSMUSP00000141696.2"/>
    <property type="gene ID" value="ENSMUSG00000028066.16"/>
</dbReference>
<dbReference type="GeneID" id="67037"/>
<dbReference type="KEGG" id="mmu:67037"/>
<dbReference type="UCSC" id="uc008pva.1">
    <molecule id="Q9CPV5-1"/>
    <property type="organism name" value="mouse"/>
</dbReference>
<dbReference type="UCSC" id="uc008pvb.1">
    <molecule id="Q9CPV5-2"/>
    <property type="organism name" value="mouse"/>
</dbReference>
<dbReference type="AGR" id="MGI:1914287"/>
<dbReference type="CTD" id="11243"/>
<dbReference type="MGI" id="MGI:1914287">
    <property type="gene designation" value="Pmf1"/>
</dbReference>
<dbReference type="VEuPathDB" id="HostDB:ENSMUSG00000028066"/>
<dbReference type="eggNOG" id="ENOG502S3AR">
    <property type="taxonomic scope" value="Eukaryota"/>
</dbReference>
<dbReference type="GeneTree" id="ENSGT00940000162656"/>
<dbReference type="HOGENOM" id="CLU_1906070_0_0_1"/>
<dbReference type="InParanoid" id="Q9CPV5"/>
<dbReference type="OMA" id="IHLAHLM"/>
<dbReference type="OrthoDB" id="18453at2759"/>
<dbReference type="PhylomeDB" id="Q9CPV5"/>
<dbReference type="TreeFam" id="TF333180"/>
<dbReference type="Reactome" id="R-MMU-141444">
    <property type="pathway name" value="Amplification of signal from unattached kinetochores via a MAD2 inhibitory signal"/>
</dbReference>
<dbReference type="Reactome" id="R-MMU-2467813">
    <property type="pathway name" value="Separation of Sister Chromatids"/>
</dbReference>
<dbReference type="Reactome" id="R-MMU-2500257">
    <property type="pathway name" value="Resolution of Sister Chromatid Cohesion"/>
</dbReference>
<dbReference type="Reactome" id="R-MMU-5663220">
    <property type="pathway name" value="RHO GTPases Activate Formins"/>
</dbReference>
<dbReference type="Reactome" id="R-MMU-68877">
    <property type="pathway name" value="Mitotic Prometaphase"/>
</dbReference>
<dbReference type="Reactome" id="R-MMU-9648025">
    <property type="pathway name" value="EML4 and NUDC in mitotic spindle formation"/>
</dbReference>
<dbReference type="BioGRID-ORCS" id="67037">
    <property type="hits" value="30 hits in 80 CRISPR screens"/>
</dbReference>
<dbReference type="ChiTaRS" id="Pmf1">
    <property type="organism name" value="mouse"/>
</dbReference>
<dbReference type="PRO" id="PR:Q9CPV5"/>
<dbReference type="Proteomes" id="UP000000589">
    <property type="component" value="Chromosome 3"/>
</dbReference>
<dbReference type="RNAct" id="Q9CPV5">
    <property type="molecule type" value="protein"/>
</dbReference>
<dbReference type="Bgee" id="ENSMUSG00000028066">
    <property type="expression patterns" value="Expressed in yolk sac and 162 other cell types or tissues"/>
</dbReference>
<dbReference type="ExpressionAtlas" id="Q9CPV5">
    <property type="expression patterns" value="baseline and differential"/>
</dbReference>
<dbReference type="GO" id="GO:0005794">
    <property type="term" value="C:Golgi apparatus"/>
    <property type="evidence" value="ECO:0007669"/>
    <property type="project" value="Ensembl"/>
</dbReference>
<dbReference type="GO" id="GO:0000776">
    <property type="term" value="C:kinetochore"/>
    <property type="evidence" value="ECO:0000303"/>
    <property type="project" value="ComplexPortal"/>
</dbReference>
<dbReference type="GO" id="GO:0000444">
    <property type="term" value="C:MIS12/MIND type complex"/>
    <property type="evidence" value="ECO:0000250"/>
    <property type="project" value="UniProtKB"/>
</dbReference>
<dbReference type="GO" id="GO:0005654">
    <property type="term" value="C:nucleoplasm"/>
    <property type="evidence" value="ECO:0007669"/>
    <property type="project" value="Ensembl"/>
</dbReference>
<dbReference type="GO" id="GO:0005634">
    <property type="term" value="C:nucleus"/>
    <property type="evidence" value="ECO:0000303"/>
    <property type="project" value="ComplexPortal"/>
</dbReference>
<dbReference type="GO" id="GO:0000922">
    <property type="term" value="C:spindle pole"/>
    <property type="evidence" value="ECO:0000303"/>
    <property type="project" value="ComplexPortal"/>
</dbReference>
<dbReference type="GO" id="GO:0043522">
    <property type="term" value="F:leucine zipper domain binding"/>
    <property type="evidence" value="ECO:0007669"/>
    <property type="project" value="Ensembl"/>
</dbReference>
<dbReference type="GO" id="GO:0003713">
    <property type="term" value="F:transcription coactivator activity"/>
    <property type="evidence" value="ECO:0000304"/>
    <property type="project" value="UniProtKB"/>
</dbReference>
<dbReference type="GO" id="GO:0008608">
    <property type="term" value="P:attachment of spindle microtubules to kinetochore"/>
    <property type="evidence" value="ECO:0000303"/>
    <property type="project" value="ComplexPortal"/>
</dbReference>
<dbReference type="GO" id="GO:0051301">
    <property type="term" value="P:cell division"/>
    <property type="evidence" value="ECO:0007669"/>
    <property type="project" value="UniProtKB-KW"/>
</dbReference>
<dbReference type="GO" id="GO:0007059">
    <property type="term" value="P:chromosome segregation"/>
    <property type="evidence" value="ECO:0000250"/>
    <property type="project" value="UniProtKB"/>
</dbReference>
<dbReference type="InterPro" id="IPR007128">
    <property type="entry name" value="PMF1/Nnf1"/>
</dbReference>
<dbReference type="PANTHER" id="PTHR15459">
    <property type="entry name" value="POLYAMINE-MODULATED FACTOR 1"/>
    <property type="match status" value="1"/>
</dbReference>
<dbReference type="PANTHER" id="PTHR15459:SF3">
    <property type="entry name" value="POLYAMINE-MODULATED FACTOR 1"/>
    <property type="match status" value="1"/>
</dbReference>
<dbReference type="Pfam" id="PF03980">
    <property type="entry name" value="Nnf1"/>
    <property type="match status" value="1"/>
</dbReference>
<proteinExistence type="evidence at protein level"/>
<comment type="function">
    <text evidence="1 4">Part of the MIS12 complex which is required for normal chromosome alignment and segregation and for kinetochore formation during mitosis (By similarity). May act as a cotranscription partner of NFE2L2 involved in regulation of polyamine-induced transcription of SSAT.</text>
</comment>
<comment type="subunit">
    <text evidence="1 4">Component of the MIS12 complex composed of MIS12, DSN1, NSL1 and PMF1. Interacts with COPS7A (By similarity). Interacts via its coiled-coil domain with the leucine-zipper domain of NFE2L2. The interaction with NFE2L2 is required for the transcriptional regulation of SSAT.</text>
</comment>
<comment type="subcellular location">
    <subcellularLocation>
        <location evidence="1">Nucleus</location>
    </subcellularLocation>
    <subcellularLocation>
        <location evidence="1">Chromosome</location>
        <location evidence="1">Centromere</location>
        <location evidence="1">Kinetochore</location>
    </subcellularLocation>
    <text evidence="1">Associated with the kinetochore.</text>
</comment>
<comment type="alternative products">
    <event type="alternative splicing"/>
    <isoform>
        <id>Q9CPV5-1</id>
        <name evidence="4">1</name>
        <name evidence="4">PMF-1L</name>
        <sequence type="displayed"/>
    </isoform>
    <isoform>
        <id>Q9CPV5-2</id>
        <name evidence="4">2</name>
        <name evidence="4">PMF-1S</name>
        <sequence type="described" ref="VSP_052141"/>
    </isoform>
</comment>
<comment type="induction">
    <text evidence="4">By polyamine analogs in M1 myeloid leukemia cells.</text>
</comment>
<gene>
    <name evidence="16" type="primary">Pmf1</name>
</gene>